<sequence length="372" mass="41393">MIFDEDSNSVTQDSGYMTVGNAYSNAVGYISMSDHWSKLTKPSSIKVESNGASPNKADLIVEPLESGFALTLGNALRRVMMSSLRGFAVYGVEIENVLHEFTSISGVREDVTDILLNISMMRVKLSGLSNKVLSLRVKGPCEVRSGMIPDTDDCIILNKDLLICTLDQDVDFNIKMYVNSGKGYVPAVKRKSVSKLSDVPVNFIATNALYSPIKKASFKVESSRIGQFTDYDRLVLSVETDGSILPDEAVALAARILQDQFQPFINFDETDEPHKKIDTKDALPYDSNLLRKVDELELSVRSYNCLKNDNITYIGDLVQKTESDMLRTPNFGRKSLNEINELLASMNLHLGMKIANWPPESIESLSKQYSEE</sequence>
<keyword id="KW-0240">DNA-directed RNA polymerase</keyword>
<keyword id="KW-0548">Nucleotidyltransferase</keyword>
<keyword id="KW-0804">Transcription</keyword>
<keyword id="KW-0808">Transferase</keyword>
<organism>
    <name type="scientific">Ehrlichia canis (strain Jake)</name>
    <dbReference type="NCBI Taxonomy" id="269484"/>
    <lineage>
        <taxon>Bacteria</taxon>
        <taxon>Pseudomonadati</taxon>
        <taxon>Pseudomonadota</taxon>
        <taxon>Alphaproteobacteria</taxon>
        <taxon>Rickettsiales</taxon>
        <taxon>Anaplasmataceae</taxon>
        <taxon>Ehrlichia</taxon>
    </lineage>
</organism>
<proteinExistence type="inferred from homology"/>
<feature type="chain" id="PRO_0000225273" description="DNA-directed RNA polymerase subunit alpha">
    <location>
        <begin position="1"/>
        <end position="372"/>
    </location>
</feature>
<feature type="region of interest" description="Alpha N-terminal domain (alpha-NTD)" evidence="1">
    <location>
        <begin position="1"/>
        <end position="268"/>
    </location>
</feature>
<feature type="region of interest" description="Alpha C-terminal domain (alpha-CTD)" evidence="1">
    <location>
        <begin position="280"/>
        <end position="372"/>
    </location>
</feature>
<name>RPOA_EHRCJ</name>
<evidence type="ECO:0000255" key="1">
    <source>
        <dbReference type="HAMAP-Rule" id="MF_00059"/>
    </source>
</evidence>
<accession>Q3YRN2</accession>
<protein>
    <recommendedName>
        <fullName evidence="1">DNA-directed RNA polymerase subunit alpha</fullName>
        <shortName evidence="1">RNAP subunit alpha</shortName>
        <ecNumber evidence="1">2.7.7.6</ecNumber>
    </recommendedName>
    <alternativeName>
        <fullName evidence="1">RNA polymerase subunit alpha</fullName>
    </alternativeName>
    <alternativeName>
        <fullName evidence="1">Transcriptase subunit alpha</fullName>
    </alternativeName>
</protein>
<comment type="function">
    <text evidence="1">DNA-dependent RNA polymerase catalyzes the transcription of DNA into RNA using the four ribonucleoside triphosphates as substrates.</text>
</comment>
<comment type="catalytic activity">
    <reaction evidence="1">
        <text>RNA(n) + a ribonucleoside 5'-triphosphate = RNA(n+1) + diphosphate</text>
        <dbReference type="Rhea" id="RHEA:21248"/>
        <dbReference type="Rhea" id="RHEA-COMP:14527"/>
        <dbReference type="Rhea" id="RHEA-COMP:17342"/>
        <dbReference type="ChEBI" id="CHEBI:33019"/>
        <dbReference type="ChEBI" id="CHEBI:61557"/>
        <dbReference type="ChEBI" id="CHEBI:140395"/>
        <dbReference type="EC" id="2.7.7.6"/>
    </reaction>
</comment>
<comment type="subunit">
    <text evidence="1">Homodimer. The RNAP catalytic core consists of 2 alpha, 1 beta, 1 beta' and 1 omega subunit. When a sigma factor is associated with the core the holoenzyme is formed, which can initiate transcription.</text>
</comment>
<comment type="domain">
    <text evidence="1">The N-terminal domain is essential for RNAP assembly and basal transcription, whereas the C-terminal domain is involved in interaction with transcriptional regulators and with upstream promoter elements.</text>
</comment>
<comment type="similarity">
    <text evidence="1">Belongs to the RNA polymerase alpha chain family.</text>
</comment>
<reference key="1">
    <citation type="journal article" date="2006" name="J. Bacteriol.">
        <title>The genome of the obligately intracellular bacterium Ehrlichia canis reveals themes of complex membrane structure and immune evasion strategies.</title>
        <authorList>
            <person name="Mavromatis K."/>
            <person name="Doyle C.K."/>
            <person name="Lykidis A."/>
            <person name="Ivanova N."/>
            <person name="Francino M.P."/>
            <person name="Chain P."/>
            <person name="Shin M."/>
            <person name="Malfatti S."/>
            <person name="Larimer F."/>
            <person name="Copeland A."/>
            <person name="Detter J.C."/>
            <person name="Land M."/>
            <person name="Richardson P.M."/>
            <person name="Yu X.J."/>
            <person name="Walker D.H."/>
            <person name="McBride J.W."/>
            <person name="Kyrpides N.C."/>
        </authorList>
    </citation>
    <scope>NUCLEOTIDE SEQUENCE [LARGE SCALE GENOMIC DNA]</scope>
    <source>
        <strain>Jake</strain>
    </source>
</reference>
<gene>
    <name evidence="1" type="primary">rpoA</name>
    <name type="ordered locus">Ecaj_0589</name>
</gene>
<dbReference type="EC" id="2.7.7.6" evidence="1"/>
<dbReference type="EMBL" id="CP000107">
    <property type="protein sequence ID" value="AAZ68623.1"/>
    <property type="molecule type" value="Genomic_DNA"/>
</dbReference>
<dbReference type="SMR" id="Q3YRN2"/>
<dbReference type="FunCoup" id="Q3YRN2">
    <property type="interactions" value="294"/>
</dbReference>
<dbReference type="STRING" id="269484.Ecaj_0589"/>
<dbReference type="KEGG" id="ecn:Ecaj_0589"/>
<dbReference type="eggNOG" id="COG0202">
    <property type="taxonomic scope" value="Bacteria"/>
</dbReference>
<dbReference type="HOGENOM" id="CLU_053084_0_0_5"/>
<dbReference type="InParanoid" id="Q3YRN2"/>
<dbReference type="Proteomes" id="UP000000435">
    <property type="component" value="Chromosome"/>
</dbReference>
<dbReference type="GO" id="GO:0005737">
    <property type="term" value="C:cytoplasm"/>
    <property type="evidence" value="ECO:0007669"/>
    <property type="project" value="UniProtKB-ARBA"/>
</dbReference>
<dbReference type="GO" id="GO:0000428">
    <property type="term" value="C:DNA-directed RNA polymerase complex"/>
    <property type="evidence" value="ECO:0007669"/>
    <property type="project" value="UniProtKB-KW"/>
</dbReference>
<dbReference type="GO" id="GO:0003677">
    <property type="term" value="F:DNA binding"/>
    <property type="evidence" value="ECO:0007669"/>
    <property type="project" value="UniProtKB-UniRule"/>
</dbReference>
<dbReference type="GO" id="GO:0003899">
    <property type="term" value="F:DNA-directed RNA polymerase activity"/>
    <property type="evidence" value="ECO:0007669"/>
    <property type="project" value="UniProtKB-UniRule"/>
</dbReference>
<dbReference type="GO" id="GO:0046983">
    <property type="term" value="F:protein dimerization activity"/>
    <property type="evidence" value="ECO:0007669"/>
    <property type="project" value="InterPro"/>
</dbReference>
<dbReference type="GO" id="GO:0006351">
    <property type="term" value="P:DNA-templated transcription"/>
    <property type="evidence" value="ECO:0007669"/>
    <property type="project" value="UniProtKB-UniRule"/>
</dbReference>
<dbReference type="CDD" id="cd06928">
    <property type="entry name" value="RNAP_alpha_NTD"/>
    <property type="match status" value="1"/>
</dbReference>
<dbReference type="FunFam" id="1.10.150.20:FF:000001">
    <property type="entry name" value="DNA-directed RNA polymerase subunit alpha"/>
    <property type="match status" value="1"/>
</dbReference>
<dbReference type="FunFam" id="2.170.120.12:FF:000001">
    <property type="entry name" value="DNA-directed RNA polymerase subunit alpha"/>
    <property type="match status" value="1"/>
</dbReference>
<dbReference type="Gene3D" id="1.10.150.20">
    <property type="entry name" value="5' to 3' exonuclease, C-terminal subdomain"/>
    <property type="match status" value="1"/>
</dbReference>
<dbReference type="Gene3D" id="2.170.120.12">
    <property type="entry name" value="DNA-directed RNA polymerase, insert domain"/>
    <property type="match status" value="1"/>
</dbReference>
<dbReference type="Gene3D" id="3.30.1360.10">
    <property type="entry name" value="RNA polymerase, RBP11-like subunit"/>
    <property type="match status" value="1"/>
</dbReference>
<dbReference type="HAMAP" id="MF_00059">
    <property type="entry name" value="RNApol_bact_RpoA"/>
    <property type="match status" value="1"/>
</dbReference>
<dbReference type="InterPro" id="IPR011262">
    <property type="entry name" value="DNA-dir_RNA_pol_insert"/>
</dbReference>
<dbReference type="InterPro" id="IPR011263">
    <property type="entry name" value="DNA-dir_RNA_pol_RpoA/D/Rpb3"/>
</dbReference>
<dbReference type="InterPro" id="IPR011773">
    <property type="entry name" value="DNA-dir_RpoA"/>
</dbReference>
<dbReference type="InterPro" id="IPR036603">
    <property type="entry name" value="RBP11-like"/>
</dbReference>
<dbReference type="InterPro" id="IPR011260">
    <property type="entry name" value="RNAP_asu_C"/>
</dbReference>
<dbReference type="InterPro" id="IPR036643">
    <property type="entry name" value="RNApol_insert_sf"/>
</dbReference>
<dbReference type="NCBIfam" id="NF003513">
    <property type="entry name" value="PRK05182.1-2"/>
    <property type="match status" value="1"/>
</dbReference>
<dbReference type="NCBIfam" id="NF003519">
    <property type="entry name" value="PRK05182.2-5"/>
    <property type="match status" value="1"/>
</dbReference>
<dbReference type="NCBIfam" id="TIGR02027">
    <property type="entry name" value="rpoA"/>
    <property type="match status" value="1"/>
</dbReference>
<dbReference type="Pfam" id="PF01000">
    <property type="entry name" value="RNA_pol_A_bac"/>
    <property type="match status" value="1"/>
</dbReference>
<dbReference type="Pfam" id="PF03118">
    <property type="entry name" value="RNA_pol_A_CTD"/>
    <property type="match status" value="1"/>
</dbReference>
<dbReference type="Pfam" id="PF01193">
    <property type="entry name" value="RNA_pol_L"/>
    <property type="match status" value="1"/>
</dbReference>
<dbReference type="SMART" id="SM00662">
    <property type="entry name" value="RPOLD"/>
    <property type="match status" value="1"/>
</dbReference>
<dbReference type="SUPFAM" id="SSF47789">
    <property type="entry name" value="C-terminal domain of RNA polymerase alpha subunit"/>
    <property type="match status" value="1"/>
</dbReference>
<dbReference type="SUPFAM" id="SSF56553">
    <property type="entry name" value="Insert subdomain of RNA polymerase alpha subunit"/>
    <property type="match status" value="1"/>
</dbReference>
<dbReference type="SUPFAM" id="SSF55257">
    <property type="entry name" value="RBP11-like subunits of RNA polymerase"/>
    <property type="match status" value="1"/>
</dbReference>